<name>METC_RHIJ3</name>
<dbReference type="EC" id="4.4.1.13" evidence="1"/>
<dbReference type="EMBL" id="AM236080">
    <property type="protein sequence ID" value="CAK07697.1"/>
    <property type="molecule type" value="Genomic_DNA"/>
</dbReference>
<dbReference type="EMBL" id="X82596">
    <property type="protein sequence ID" value="CAA57932.1"/>
    <property type="molecule type" value="Genomic_DNA"/>
</dbReference>
<dbReference type="RefSeq" id="WP_011651802.1">
    <property type="nucleotide sequence ID" value="NC_008380.1"/>
</dbReference>
<dbReference type="SMR" id="Q52811"/>
<dbReference type="EnsemblBacteria" id="CAK07697">
    <property type="protein sequence ID" value="CAK07697"/>
    <property type="gene ID" value="RL2205"/>
</dbReference>
<dbReference type="KEGG" id="rle:RL2205"/>
<dbReference type="eggNOG" id="COG0626">
    <property type="taxonomic scope" value="Bacteria"/>
</dbReference>
<dbReference type="HOGENOM" id="CLU_018986_5_1_5"/>
<dbReference type="UniPathway" id="UPA00051">
    <property type="reaction ID" value="UER00078"/>
</dbReference>
<dbReference type="Proteomes" id="UP000006575">
    <property type="component" value="Chromosome"/>
</dbReference>
<dbReference type="GO" id="GO:0047804">
    <property type="term" value="F:cysteine-S-conjugate beta-lyase activity"/>
    <property type="evidence" value="ECO:0007669"/>
    <property type="project" value="UniProtKB-EC"/>
</dbReference>
<dbReference type="GO" id="GO:0030170">
    <property type="term" value="F:pyridoxal phosphate binding"/>
    <property type="evidence" value="ECO:0007669"/>
    <property type="project" value="InterPro"/>
</dbReference>
<dbReference type="GO" id="GO:0019450">
    <property type="term" value="P:L-cysteine catabolic process to pyruvate"/>
    <property type="evidence" value="ECO:0007669"/>
    <property type="project" value="TreeGrafter"/>
</dbReference>
<dbReference type="GO" id="GO:0009086">
    <property type="term" value="P:methionine biosynthetic process"/>
    <property type="evidence" value="ECO:0007669"/>
    <property type="project" value="UniProtKB-KW"/>
</dbReference>
<dbReference type="GO" id="GO:0019346">
    <property type="term" value="P:transsulfuration"/>
    <property type="evidence" value="ECO:0007669"/>
    <property type="project" value="InterPro"/>
</dbReference>
<dbReference type="CDD" id="cd00614">
    <property type="entry name" value="CGS_like"/>
    <property type="match status" value="1"/>
</dbReference>
<dbReference type="FunFam" id="3.40.640.10:FF:000046">
    <property type="entry name" value="Cystathionine gamma-lyase"/>
    <property type="match status" value="1"/>
</dbReference>
<dbReference type="Gene3D" id="3.90.1150.10">
    <property type="entry name" value="Aspartate Aminotransferase, domain 1"/>
    <property type="match status" value="1"/>
</dbReference>
<dbReference type="Gene3D" id="3.40.640.10">
    <property type="entry name" value="Type I PLP-dependent aspartate aminotransferase-like (Major domain)"/>
    <property type="match status" value="1"/>
</dbReference>
<dbReference type="InterPro" id="IPR000277">
    <property type="entry name" value="Cys/Met-Metab_PyrdxlP-dep_enz"/>
</dbReference>
<dbReference type="InterPro" id="IPR006233">
    <property type="entry name" value="Cys_b_lyase_bac"/>
</dbReference>
<dbReference type="InterPro" id="IPR015424">
    <property type="entry name" value="PyrdxlP-dep_Trfase"/>
</dbReference>
<dbReference type="InterPro" id="IPR015421">
    <property type="entry name" value="PyrdxlP-dep_Trfase_major"/>
</dbReference>
<dbReference type="InterPro" id="IPR015422">
    <property type="entry name" value="PyrdxlP-dep_Trfase_small"/>
</dbReference>
<dbReference type="NCBIfam" id="TIGR01324">
    <property type="entry name" value="cysta_beta_ly_B"/>
    <property type="match status" value="1"/>
</dbReference>
<dbReference type="NCBIfam" id="NF004626">
    <property type="entry name" value="PRK05967.1"/>
    <property type="match status" value="1"/>
</dbReference>
<dbReference type="PANTHER" id="PTHR43500">
    <property type="entry name" value="CYSTATHIONINE BETA-LYASE-RELATED"/>
    <property type="match status" value="1"/>
</dbReference>
<dbReference type="PANTHER" id="PTHR43500:SF1">
    <property type="entry name" value="CYSTATHIONINE BETA-LYASE-RELATED"/>
    <property type="match status" value="1"/>
</dbReference>
<dbReference type="Pfam" id="PF01053">
    <property type="entry name" value="Cys_Met_Meta_PP"/>
    <property type="match status" value="1"/>
</dbReference>
<dbReference type="PIRSF" id="PIRSF001434">
    <property type="entry name" value="CGS"/>
    <property type="match status" value="1"/>
</dbReference>
<dbReference type="SUPFAM" id="SSF53383">
    <property type="entry name" value="PLP-dependent transferases"/>
    <property type="match status" value="1"/>
</dbReference>
<evidence type="ECO:0000250" key="1">
    <source>
        <dbReference type="UniProtKB" id="P06721"/>
    </source>
</evidence>
<evidence type="ECO:0000305" key="2"/>
<gene>
    <name type="primary">metC</name>
    <name type="ordered locus">RL2205</name>
</gene>
<protein>
    <recommendedName>
        <fullName>Putative cystathionine beta-lyase</fullName>
        <shortName>CBL</shortName>
        <ecNumber evidence="1">4.4.1.13</ecNumber>
    </recommendedName>
    <alternativeName>
        <fullName>Beta-cystathionase</fullName>
    </alternativeName>
    <alternativeName>
        <fullName>Cysteine lyase</fullName>
    </alternativeName>
    <alternativeName>
        <fullName>Cysteine-S-conjugate beta-lyase</fullName>
    </alternativeName>
    <alternativeName>
        <fullName>ORF5</fullName>
    </alternativeName>
</protein>
<keyword id="KW-0028">Amino-acid biosynthesis</keyword>
<keyword id="KW-0456">Lyase</keyword>
<keyword id="KW-0486">Methionine biosynthesis</keyword>
<keyword id="KW-0663">Pyridoxal phosphate</keyword>
<feature type="chain" id="PRO_0000114771" description="Putative cystathionine beta-lyase">
    <location>
        <begin position="1"/>
        <end position="396"/>
    </location>
</feature>
<feature type="modified residue" description="N6-(pyridoxal phosphate)lysine" evidence="1">
    <location>
        <position position="210"/>
    </location>
</feature>
<accession>Q52811</accession>
<accession>Q1MH70</accession>
<organism>
    <name type="scientific">Rhizobium johnstonii (strain DSM 114642 / LMG 32736 / 3841)</name>
    <name type="common">Rhizobium leguminosarum bv. viciae</name>
    <dbReference type="NCBI Taxonomy" id="216596"/>
    <lineage>
        <taxon>Bacteria</taxon>
        <taxon>Pseudomonadati</taxon>
        <taxon>Pseudomonadota</taxon>
        <taxon>Alphaproteobacteria</taxon>
        <taxon>Hyphomicrobiales</taxon>
        <taxon>Rhizobiaceae</taxon>
        <taxon>Rhizobium/Agrobacterium group</taxon>
        <taxon>Rhizobium</taxon>
        <taxon>Rhizobium johnstonii</taxon>
    </lineage>
</organism>
<reference key="1">
    <citation type="journal article" date="2006" name="Genome Biol.">
        <title>The genome of Rhizobium leguminosarum has recognizable core and accessory components.</title>
        <authorList>
            <person name="Young J.P.W."/>
            <person name="Crossman L.C."/>
            <person name="Johnston A.W.B."/>
            <person name="Thomson N.R."/>
            <person name="Ghazoui Z.F."/>
            <person name="Hull K.H."/>
            <person name="Wexler M."/>
            <person name="Curson A.R.J."/>
            <person name="Todd J.D."/>
            <person name="Poole P.S."/>
            <person name="Mauchline T.H."/>
            <person name="East A.K."/>
            <person name="Quail M.A."/>
            <person name="Churcher C."/>
            <person name="Arrowsmith C."/>
            <person name="Cherevach I."/>
            <person name="Chillingworth T."/>
            <person name="Clarke K."/>
            <person name="Cronin A."/>
            <person name="Davis P."/>
            <person name="Fraser A."/>
            <person name="Hance Z."/>
            <person name="Hauser H."/>
            <person name="Jagels K."/>
            <person name="Moule S."/>
            <person name="Mungall K."/>
            <person name="Norbertczak H."/>
            <person name="Rabbinowitsch E."/>
            <person name="Sanders M."/>
            <person name="Simmonds M."/>
            <person name="Whitehead S."/>
            <person name="Parkhill J."/>
        </authorList>
    </citation>
    <scope>NUCLEOTIDE SEQUENCE [LARGE SCALE GENOMIC DNA]</scope>
    <source>
        <strain>DSM 114642 / LMG 32736 / 3841</strain>
    </source>
</reference>
<reference key="2">
    <citation type="journal article" date="1996" name="Mol. Microbiol.">
        <title>The general L-amino acid permease of Rhizobium leguminosarum is an ABC uptake system that also influences efflux of solutes.</title>
        <authorList>
            <person name="Walshaw D.L."/>
            <person name="Poole P.S."/>
        </authorList>
    </citation>
    <scope>NUCLEOTIDE SEQUENCE [GENOMIC DNA] OF 1-117</scope>
</reference>
<proteinExistence type="inferred from homology"/>
<sequence length="396" mass="43004">MKDKDSLLQNAGINTRLTHIGNDPFDYHGFINPPVVHASTVLFPNARAMETRTQKYTYGTRGTPTTDALCEAIDALEGSAGTILVPSGLAAVTIPFLGFVAAGDHALVVDSVYGPTRHFCDTMLKRLGVEVEYYHPEIGAGIETLFRSNTKLVHTEAPGSNTFEMQDIPAISAVAHRHGAVVMMDNTWATPVYFRPLDHGVDISIHASTKYPSGHSDILLGTVSANAEHWERLKEANGVLGICGAPDDAYQILRGLRTMGLRLERHYESALDIAKWLEGRDDVARVLHPALPSFPSHHLWKRDFKGASGIFSFVLAADGPEKSRAKAHAFLDALRIFGLGYSWGGFESLALHAYLNDRTVAKAPTDGPVIRLQIGIEDVADLKADIERGFAAASAV</sequence>
<comment type="function">
    <text evidence="1">Catalyzes the cleavage of cystathionine to homocysteine, pyruvate and ammonia during methionine biosynthesis.</text>
</comment>
<comment type="catalytic activity">
    <reaction evidence="1">
        <text>L,L-cystathionine + H2O = L-homocysteine + pyruvate + NH4(+)</text>
        <dbReference type="Rhea" id="RHEA:13965"/>
        <dbReference type="ChEBI" id="CHEBI:15361"/>
        <dbReference type="ChEBI" id="CHEBI:15377"/>
        <dbReference type="ChEBI" id="CHEBI:28938"/>
        <dbReference type="ChEBI" id="CHEBI:58161"/>
        <dbReference type="ChEBI" id="CHEBI:58199"/>
    </reaction>
</comment>
<comment type="catalytic activity">
    <reaction evidence="1">
        <text>an S-substituted L-cysteine + H2O = a thiol + pyruvate + NH4(+)</text>
        <dbReference type="Rhea" id="RHEA:18121"/>
        <dbReference type="ChEBI" id="CHEBI:15361"/>
        <dbReference type="ChEBI" id="CHEBI:15377"/>
        <dbReference type="ChEBI" id="CHEBI:28938"/>
        <dbReference type="ChEBI" id="CHEBI:29256"/>
        <dbReference type="ChEBI" id="CHEBI:58717"/>
        <dbReference type="EC" id="4.4.1.13"/>
    </reaction>
</comment>
<comment type="cofactor">
    <cofactor evidence="1">
        <name>pyridoxal 5'-phosphate</name>
        <dbReference type="ChEBI" id="CHEBI:597326"/>
    </cofactor>
</comment>
<comment type="pathway">
    <text evidence="1">Amino-acid biosynthesis; L-methionine biosynthesis via de novo pathway; L-homocysteine from L-cystathionine: step 1/1.</text>
</comment>
<comment type="similarity">
    <text evidence="2">Belongs to the trans-sulfuration enzymes family.</text>
</comment>